<gene>
    <name evidence="4" type="primary">AZS22-8b</name>
</gene>
<evidence type="ECO:0000250" key="1">
    <source>
        <dbReference type="UniProtKB" id="P04698"/>
    </source>
</evidence>
<evidence type="ECO:0000255" key="2"/>
<evidence type="ECO:0000305" key="3"/>
<evidence type="ECO:0000305" key="4">
    <source>
    </source>
</evidence>
<feature type="signal peptide" evidence="2">
    <location>
        <begin position="1" status="less than"/>
        <end position="16"/>
    </location>
</feature>
<feature type="chain" id="PRO_0000041625" description="22 kDa alpha-zein 8b" evidence="2">
    <location>
        <begin position="17"/>
        <end position="261"/>
    </location>
</feature>
<feature type="non-terminal residue">
    <location>
        <position position="1"/>
    </location>
</feature>
<organism>
    <name type="scientific">Zea mays</name>
    <name type="common">Maize</name>
    <dbReference type="NCBI Taxonomy" id="4577"/>
    <lineage>
        <taxon>Eukaryota</taxon>
        <taxon>Viridiplantae</taxon>
        <taxon>Streptophyta</taxon>
        <taxon>Embryophyta</taxon>
        <taxon>Tracheophyta</taxon>
        <taxon>Spermatophyta</taxon>
        <taxon>Magnoliopsida</taxon>
        <taxon>Liliopsida</taxon>
        <taxon>Poales</taxon>
        <taxon>Poaceae</taxon>
        <taxon>PACMAD clade</taxon>
        <taxon>Panicoideae</taxon>
        <taxon>Andropogonodae</taxon>
        <taxon>Andropogoneae</taxon>
        <taxon>Tripsacinae</taxon>
        <taxon>Zea</taxon>
    </lineage>
</organism>
<dbReference type="EMBL" id="M12141">
    <property type="protein sequence ID" value="AAA33534.1"/>
    <property type="molecule type" value="mRNA"/>
</dbReference>
<dbReference type="PIR" id="C24557">
    <property type="entry name" value="ZIZMC2"/>
</dbReference>
<dbReference type="STRING" id="4577.P06679"/>
<dbReference type="MaizeGDB" id="58096"/>
<dbReference type="InParanoid" id="P06679"/>
<dbReference type="Proteomes" id="UP000007305">
    <property type="component" value="Unplaced"/>
</dbReference>
<dbReference type="ExpressionAtlas" id="P06679">
    <property type="expression patterns" value="baseline and differential"/>
</dbReference>
<dbReference type="GO" id="GO:0045735">
    <property type="term" value="F:nutrient reservoir activity"/>
    <property type="evidence" value="ECO:0007669"/>
    <property type="project" value="UniProtKB-KW"/>
</dbReference>
<dbReference type="InterPro" id="IPR051529">
    <property type="entry name" value="Seed_Storage_Prolamin"/>
</dbReference>
<dbReference type="InterPro" id="IPR002530">
    <property type="entry name" value="Zein"/>
</dbReference>
<dbReference type="PANTHER" id="PTHR48199">
    <property type="entry name" value="ALPHA KAFIRIN"/>
    <property type="match status" value="1"/>
</dbReference>
<dbReference type="PANTHER" id="PTHR48199:SF1">
    <property type="entry name" value="ALPHA KAFIRIN"/>
    <property type="match status" value="1"/>
</dbReference>
<dbReference type="Pfam" id="PF01559">
    <property type="entry name" value="Zein"/>
    <property type="match status" value="1"/>
</dbReference>
<protein>
    <recommendedName>
        <fullName evidence="4">22 kDa alpha-zein 8b</fullName>
    </recommendedName>
    <alternativeName>
        <fullName>22 kDa zein 22C2</fullName>
    </alternativeName>
    <alternativeName>
        <fullName>Zein-alpha 22C2</fullName>
    </alternativeName>
</protein>
<keyword id="KW-1185">Reference proteome</keyword>
<keyword id="KW-0708">Seed storage protein</keyword>
<keyword id="KW-0732">Signal</keyword>
<keyword id="KW-0758">Storage protein</keyword>
<reference key="1">
    <citation type="journal article" date="1985" name="J. Biol. Chem.">
        <title>Nucleotide sequence analysis of zein mRNAs from maize endosperm.</title>
        <authorList>
            <person name="Marks M.D."/>
            <person name="Lindell J.S."/>
            <person name="Larkins B.A."/>
        </authorList>
    </citation>
    <scope>NUCLEOTIDE SEQUENCE [MRNA]</scope>
    <source>
        <strain>cv. Wisconsin 64A</strain>
    </source>
</reference>
<reference key="2">
    <citation type="journal article" date="2001" name="Genome Res.">
        <title>Sequence, regulation, and evolution of the maize 22-kD alpha zein gene family.</title>
        <authorList>
            <person name="Song R."/>
            <person name="Llaca V."/>
            <person name="Linton E."/>
            <person name="Messing J."/>
        </authorList>
    </citation>
    <scope>GENE FAMILY</scope>
    <scope>NOMENCLATURE</scope>
</reference>
<accession>P06679</accession>
<sequence>LALLALLALFVSATNAFIIPQCSLAPSAIIPQFLPPVTSMGFEHLAVQAYRLQQALAASVLQQPINQLQQQSLAHLTIQTIATQQQQQFLPSVSQLDVVNPVAYLQQQLLASNPLALANVAAYQQQQQLQQFLPALSQLAMVNPAAYLQQQQLLSSSPLAVGNAPTYLQQQLLQQIVPALTQLAVANPAAYLQQLLPFNQLTVSNSAAYLQQRQQLLNPLEVPNPLVAGFLQQQQLLPYSQFSLMNPALSWQQPIVGGAIF</sequence>
<comment type="function">
    <text evidence="3">Zeins are major seed storage proteins.</text>
</comment>
<comment type="miscellaneous">
    <text>The alpha zeins of 19 kDa and 22 kDa account for 70% of the total zein fraction. They are encoded by a large multigene family.</text>
</comment>
<comment type="miscellaneous">
    <text evidence="1">Structurally, 22K and 19K zeins are composed of nine adjacent, topologically antiparallel helices clustered within a distorted cylinder.</text>
</comment>
<comment type="similarity">
    <text evidence="3">Belongs to the zein family.</text>
</comment>
<comment type="caution">
    <text>Due to sequence microheterogeneity among zein messenger RNAs, this protein might be encoded by the same gene as AZS22-8 (AC P04699).</text>
</comment>
<proteinExistence type="evidence at transcript level"/>
<name>ZEAWW_MAIZE</name>